<proteinExistence type="predicted"/>
<sequence>MRTLTLCWLALLALAVTGVLLGGAGDSPWLLAAVLACAVAKGWLIGERFMELAHAPALWRRLLLAWPLLMALAVGAALYLARMNN</sequence>
<reference key="1">
    <citation type="journal article" date="1994" name="Biosci. Biotechnol. Biochem.">
        <title>Structure and ANR-dependent transcription of the nir genes for denitrification from Pseudomonas aeruginosa.</title>
        <authorList>
            <person name="Arai H."/>
            <person name="Igarashi Y."/>
            <person name="Kodama T."/>
        </authorList>
    </citation>
    <scope>NUCLEOTIDE SEQUENCE [GENOMIC DNA]</scope>
    <source>
        <strain>PAO1161</strain>
    </source>
</reference>
<reference key="2">
    <citation type="journal article" date="2000" name="Nature">
        <title>Complete genome sequence of Pseudomonas aeruginosa PAO1, an opportunistic pathogen.</title>
        <authorList>
            <person name="Stover C.K."/>
            <person name="Pham X.-Q.T."/>
            <person name="Erwin A.L."/>
            <person name="Mizoguchi S.D."/>
            <person name="Warrener P."/>
            <person name="Hickey M.J."/>
            <person name="Brinkman F.S.L."/>
            <person name="Hufnagle W.O."/>
            <person name="Kowalik D.J."/>
            <person name="Lagrou M."/>
            <person name="Garber R.L."/>
            <person name="Goltry L."/>
            <person name="Tolentino E."/>
            <person name="Westbrock-Wadman S."/>
            <person name="Yuan Y."/>
            <person name="Brody L.L."/>
            <person name="Coulter S.N."/>
            <person name="Folger K.R."/>
            <person name="Kas A."/>
            <person name="Larbig K."/>
            <person name="Lim R.M."/>
            <person name="Smith K.A."/>
            <person name="Spencer D.H."/>
            <person name="Wong G.K.-S."/>
            <person name="Wu Z."/>
            <person name="Paulsen I.T."/>
            <person name="Reizer J."/>
            <person name="Saier M.H. Jr."/>
            <person name="Hancock R.E.W."/>
            <person name="Lory S."/>
            <person name="Olson M.V."/>
        </authorList>
    </citation>
    <scope>NUCLEOTIDE SEQUENCE [LARGE SCALE GENOMIC DNA]</scope>
    <source>
        <strain>ATCC 15692 / DSM 22644 / CIP 104116 / JCM 14847 / LMG 12228 / 1C / PRS 101 / PAO1</strain>
    </source>
</reference>
<organism>
    <name type="scientific">Pseudomonas aeruginosa (strain ATCC 15692 / DSM 22644 / CIP 104116 / JCM 14847 / LMG 12228 / 1C / PRS 101 / PAO1)</name>
    <dbReference type="NCBI Taxonomy" id="208964"/>
    <lineage>
        <taxon>Bacteria</taxon>
        <taxon>Pseudomonadati</taxon>
        <taxon>Pseudomonadota</taxon>
        <taxon>Gammaproteobacteria</taxon>
        <taxon>Pseudomonadales</taxon>
        <taxon>Pseudomonadaceae</taxon>
        <taxon>Pseudomonas</taxon>
    </lineage>
</organism>
<accession>Q51483</accession>
<dbReference type="EMBL" id="D37883">
    <property type="protein sequence ID" value="BAA07125.1"/>
    <property type="molecule type" value="Genomic_DNA"/>
</dbReference>
<dbReference type="EMBL" id="AE004091">
    <property type="protein sequence ID" value="AAG03911.1"/>
    <property type="molecule type" value="Genomic_DNA"/>
</dbReference>
<dbReference type="PIR" id="JC2290">
    <property type="entry name" value="JC2290"/>
</dbReference>
<dbReference type="RefSeq" id="NP_249213.1">
    <property type="nucleotide sequence ID" value="NC_002516.2"/>
</dbReference>
<dbReference type="RefSeq" id="WP_003113239.1">
    <property type="nucleotide sequence ID" value="NZ_QZGE01000010.1"/>
</dbReference>
<dbReference type="SMR" id="Q51483"/>
<dbReference type="STRING" id="208964.PA0522"/>
<dbReference type="PaxDb" id="208964-PA0522"/>
<dbReference type="DNASU" id="882203"/>
<dbReference type="GeneID" id="882203"/>
<dbReference type="KEGG" id="pae:PA0522"/>
<dbReference type="PATRIC" id="fig|208964.12.peg.552"/>
<dbReference type="PseudoCAP" id="PA0522"/>
<dbReference type="HOGENOM" id="CLU_175439_2_2_6"/>
<dbReference type="InParanoid" id="Q51483"/>
<dbReference type="BioCyc" id="PAER208964:G1FZ6-527-MONOMER"/>
<dbReference type="Proteomes" id="UP000002438">
    <property type="component" value="Chromosome"/>
</dbReference>
<dbReference type="GO" id="GO:0005886">
    <property type="term" value="C:plasma membrane"/>
    <property type="evidence" value="ECO:0007669"/>
    <property type="project" value="UniProtKB-SubCell"/>
</dbReference>
<dbReference type="InterPro" id="IPR005171">
    <property type="entry name" value="Cyt_c_oxidase_su4_prok"/>
</dbReference>
<dbReference type="Pfam" id="PF03626">
    <property type="entry name" value="COX4_pro"/>
    <property type="match status" value="1"/>
</dbReference>
<protein>
    <recommendedName>
        <fullName>Uncharacterized protein PA0522</fullName>
    </recommendedName>
</protein>
<gene>
    <name type="ordered locus">PA0522</name>
</gene>
<evidence type="ECO:0000255" key="1"/>
<evidence type="ECO:0000305" key="2"/>
<feature type="chain" id="PRO_0000206247" description="Uncharacterized protein PA0522">
    <location>
        <begin position="1"/>
        <end position="85"/>
    </location>
</feature>
<feature type="transmembrane region" description="Helical" evidence="1">
    <location>
        <begin position="4"/>
        <end position="24"/>
    </location>
</feature>
<feature type="transmembrane region" description="Helical" evidence="1">
    <location>
        <begin position="27"/>
        <end position="47"/>
    </location>
</feature>
<feature type="transmembrane region" description="Helical" evidence="1">
    <location>
        <begin position="61"/>
        <end position="81"/>
    </location>
</feature>
<comment type="subcellular location">
    <subcellularLocation>
        <location evidence="2">Cell membrane</location>
        <topology evidence="2">Multi-pass membrane protein</topology>
    </subcellularLocation>
</comment>
<name>Y522_PSEAE</name>
<keyword id="KW-1003">Cell membrane</keyword>
<keyword id="KW-0472">Membrane</keyword>
<keyword id="KW-1185">Reference proteome</keyword>
<keyword id="KW-0812">Transmembrane</keyword>
<keyword id="KW-1133">Transmembrane helix</keyword>